<protein>
    <recommendedName>
        <fullName evidence="1">UDP-N-acetylmuramate--L-alanine ligase</fullName>
        <ecNumber evidence="1">6.3.2.8</ecNumber>
    </recommendedName>
    <alternativeName>
        <fullName evidence="1">UDP-N-acetylmuramoyl-L-alanine synthetase</fullName>
    </alternativeName>
</protein>
<name>MURC_PSYA2</name>
<proteinExistence type="inferred from homology"/>
<reference key="1">
    <citation type="journal article" date="2010" name="Appl. Environ. Microbiol.">
        <title>The genome sequence of Psychrobacter arcticus 273-4, a psychroactive Siberian permafrost bacterium, reveals mechanisms for adaptation to low-temperature growth.</title>
        <authorList>
            <person name="Ayala-del-Rio H.L."/>
            <person name="Chain P.S."/>
            <person name="Grzymski J.J."/>
            <person name="Ponder M.A."/>
            <person name="Ivanova N."/>
            <person name="Bergholz P.W."/>
            <person name="Di Bartolo G."/>
            <person name="Hauser L."/>
            <person name="Land M."/>
            <person name="Bakermans C."/>
            <person name="Rodrigues D."/>
            <person name="Klappenbach J."/>
            <person name="Zarka D."/>
            <person name="Larimer F."/>
            <person name="Richardson P."/>
            <person name="Murray A."/>
            <person name="Thomashow M."/>
            <person name="Tiedje J.M."/>
        </authorList>
    </citation>
    <scope>NUCLEOTIDE SEQUENCE [LARGE SCALE GENOMIC DNA]</scope>
    <source>
        <strain>DSM 17307 / VKM B-2377 / 273-4</strain>
    </source>
</reference>
<accession>Q4FQW0</accession>
<gene>
    <name evidence="1" type="primary">murC</name>
    <name type="ordered locus">Psyc_1750</name>
</gene>
<dbReference type="EC" id="6.3.2.8" evidence="1"/>
<dbReference type="EMBL" id="CP000082">
    <property type="protein sequence ID" value="AAZ19598.1"/>
    <property type="molecule type" value="Genomic_DNA"/>
</dbReference>
<dbReference type="RefSeq" id="WP_011281010.1">
    <property type="nucleotide sequence ID" value="NC_007204.1"/>
</dbReference>
<dbReference type="SMR" id="Q4FQW0"/>
<dbReference type="STRING" id="259536.Psyc_1750"/>
<dbReference type="KEGG" id="par:Psyc_1750"/>
<dbReference type="eggNOG" id="COG0773">
    <property type="taxonomic scope" value="Bacteria"/>
</dbReference>
<dbReference type="HOGENOM" id="CLU_028104_2_2_6"/>
<dbReference type="OrthoDB" id="9804126at2"/>
<dbReference type="UniPathway" id="UPA00219"/>
<dbReference type="Proteomes" id="UP000000546">
    <property type="component" value="Chromosome"/>
</dbReference>
<dbReference type="GO" id="GO:0005737">
    <property type="term" value="C:cytoplasm"/>
    <property type="evidence" value="ECO:0007669"/>
    <property type="project" value="UniProtKB-SubCell"/>
</dbReference>
<dbReference type="GO" id="GO:0005524">
    <property type="term" value="F:ATP binding"/>
    <property type="evidence" value="ECO:0007669"/>
    <property type="project" value="UniProtKB-UniRule"/>
</dbReference>
<dbReference type="GO" id="GO:0008763">
    <property type="term" value="F:UDP-N-acetylmuramate-L-alanine ligase activity"/>
    <property type="evidence" value="ECO:0007669"/>
    <property type="project" value="UniProtKB-UniRule"/>
</dbReference>
<dbReference type="GO" id="GO:0051301">
    <property type="term" value="P:cell division"/>
    <property type="evidence" value="ECO:0007669"/>
    <property type="project" value="UniProtKB-KW"/>
</dbReference>
<dbReference type="GO" id="GO:0071555">
    <property type="term" value="P:cell wall organization"/>
    <property type="evidence" value="ECO:0007669"/>
    <property type="project" value="UniProtKB-KW"/>
</dbReference>
<dbReference type="GO" id="GO:0009252">
    <property type="term" value="P:peptidoglycan biosynthetic process"/>
    <property type="evidence" value="ECO:0007669"/>
    <property type="project" value="UniProtKB-UniRule"/>
</dbReference>
<dbReference type="GO" id="GO:0008360">
    <property type="term" value="P:regulation of cell shape"/>
    <property type="evidence" value="ECO:0007669"/>
    <property type="project" value="UniProtKB-KW"/>
</dbReference>
<dbReference type="FunFam" id="3.40.1190.10:FF:000001">
    <property type="entry name" value="UDP-N-acetylmuramate--L-alanine ligase"/>
    <property type="match status" value="1"/>
</dbReference>
<dbReference type="Gene3D" id="3.90.190.20">
    <property type="entry name" value="Mur ligase, C-terminal domain"/>
    <property type="match status" value="1"/>
</dbReference>
<dbReference type="Gene3D" id="3.40.1190.10">
    <property type="entry name" value="Mur-like, catalytic domain"/>
    <property type="match status" value="1"/>
</dbReference>
<dbReference type="Gene3D" id="3.40.50.720">
    <property type="entry name" value="NAD(P)-binding Rossmann-like Domain"/>
    <property type="match status" value="1"/>
</dbReference>
<dbReference type="HAMAP" id="MF_00046">
    <property type="entry name" value="MurC"/>
    <property type="match status" value="1"/>
</dbReference>
<dbReference type="InterPro" id="IPR036565">
    <property type="entry name" value="Mur-like_cat_sf"/>
</dbReference>
<dbReference type="InterPro" id="IPR004101">
    <property type="entry name" value="Mur_ligase_C"/>
</dbReference>
<dbReference type="InterPro" id="IPR036615">
    <property type="entry name" value="Mur_ligase_C_dom_sf"/>
</dbReference>
<dbReference type="InterPro" id="IPR013221">
    <property type="entry name" value="Mur_ligase_cen"/>
</dbReference>
<dbReference type="InterPro" id="IPR000713">
    <property type="entry name" value="Mur_ligase_N"/>
</dbReference>
<dbReference type="InterPro" id="IPR050061">
    <property type="entry name" value="MurCDEF_pg_biosynth"/>
</dbReference>
<dbReference type="InterPro" id="IPR005758">
    <property type="entry name" value="UDP-N-AcMur_Ala_ligase_MurC"/>
</dbReference>
<dbReference type="NCBIfam" id="TIGR01082">
    <property type="entry name" value="murC"/>
    <property type="match status" value="1"/>
</dbReference>
<dbReference type="PANTHER" id="PTHR43445:SF3">
    <property type="entry name" value="UDP-N-ACETYLMURAMATE--L-ALANINE LIGASE"/>
    <property type="match status" value="1"/>
</dbReference>
<dbReference type="PANTHER" id="PTHR43445">
    <property type="entry name" value="UDP-N-ACETYLMURAMATE--L-ALANINE LIGASE-RELATED"/>
    <property type="match status" value="1"/>
</dbReference>
<dbReference type="Pfam" id="PF01225">
    <property type="entry name" value="Mur_ligase"/>
    <property type="match status" value="1"/>
</dbReference>
<dbReference type="Pfam" id="PF02875">
    <property type="entry name" value="Mur_ligase_C"/>
    <property type="match status" value="1"/>
</dbReference>
<dbReference type="Pfam" id="PF08245">
    <property type="entry name" value="Mur_ligase_M"/>
    <property type="match status" value="1"/>
</dbReference>
<dbReference type="SUPFAM" id="SSF51984">
    <property type="entry name" value="MurCD N-terminal domain"/>
    <property type="match status" value="1"/>
</dbReference>
<dbReference type="SUPFAM" id="SSF53623">
    <property type="entry name" value="MurD-like peptide ligases, catalytic domain"/>
    <property type="match status" value="1"/>
</dbReference>
<dbReference type="SUPFAM" id="SSF53244">
    <property type="entry name" value="MurD-like peptide ligases, peptide-binding domain"/>
    <property type="match status" value="1"/>
</dbReference>
<comment type="function">
    <text evidence="1">Cell wall formation.</text>
</comment>
<comment type="catalytic activity">
    <reaction evidence="1">
        <text>UDP-N-acetyl-alpha-D-muramate + L-alanine + ATP = UDP-N-acetyl-alpha-D-muramoyl-L-alanine + ADP + phosphate + H(+)</text>
        <dbReference type="Rhea" id="RHEA:23372"/>
        <dbReference type="ChEBI" id="CHEBI:15378"/>
        <dbReference type="ChEBI" id="CHEBI:30616"/>
        <dbReference type="ChEBI" id="CHEBI:43474"/>
        <dbReference type="ChEBI" id="CHEBI:57972"/>
        <dbReference type="ChEBI" id="CHEBI:70757"/>
        <dbReference type="ChEBI" id="CHEBI:83898"/>
        <dbReference type="ChEBI" id="CHEBI:456216"/>
        <dbReference type="EC" id="6.3.2.8"/>
    </reaction>
</comment>
<comment type="pathway">
    <text evidence="1">Cell wall biogenesis; peptidoglycan biosynthesis.</text>
</comment>
<comment type="subcellular location">
    <subcellularLocation>
        <location evidence="1">Cytoplasm</location>
    </subcellularLocation>
</comment>
<comment type="similarity">
    <text evidence="1">Belongs to the MurCDEF family.</text>
</comment>
<evidence type="ECO:0000255" key="1">
    <source>
        <dbReference type="HAMAP-Rule" id="MF_00046"/>
    </source>
</evidence>
<feature type="chain" id="PRO_0000242580" description="UDP-N-acetylmuramate--L-alanine ligase">
    <location>
        <begin position="1"/>
        <end position="479"/>
    </location>
</feature>
<feature type="binding site" evidence="1">
    <location>
        <begin position="128"/>
        <end position="134"/>
    </location>
    <ligand>
        <name>ATP</name>
        <dbReference type="ChEBI" id="CHEBI:30616"/>
    </ligand>
</feature>
<organism>
    <name type="scientific">Psychrobacter arcticus (strain DSM 17307 / VKM B-2377 / 273-4)</name>
    <dbReference type="NCBI Taxonomy" id="259536"/>
    <lineage>
        <taxon>Bacteria</taxon>
        <taxon>Pseudomonadati</taxon>
        <taxon>Pseudomonadota</taxon>
        <taxon>Gammaproteobacteria</taxon>
        <taxon>Moraxellales</taxon>
        <taxon>Moraxellaceae</taxon>
        <taxon>Psychrobacter</taxon>
    </lineage>
</organism>
<keyword id="KW-0067">ATP-binding</keyword>
<keyword id="KW-0131">Cell cycle</keyword>
<keyword id="KW-0132">Cell division</keyword>
<keyword id="KW-0133">Cell shape</keyword>
<keyword id="KW-0961">Cell wall biogenesis/degradation</keyword>
<keyword id="KW-0963">Cytoplasm</keyword>
<keyword id="KW-0436">Ligase</keyword>
<keyword id="KW-0547">Nucleotide-binding</keyword>
<keyword id="KW-0573">Peptidoglycan synthesis</keyword>
<keyword id="KW-1185">Reference proteome</keyword>
<sequence>MSTSAKALTKRLIEIPEMRRIQHLHFIGIGGSGMCGIAEVMNNQGYKVSGSDITESLVTKRLEQIGIDINIGHDSKNIANADVIVVSSAIDRSNPEVKAALEARLPVVRRADMLGELMRYRHGIAIAGAHGKTTTTSLLTTMMAEGNLDPTYVIGGKLNASGKNAALGSSRFLIAEADESDASFLSLHPMAAIVTNIDQDHMETYGNSFDKLKAAYIQFLQNMPFYGLAVVCGDDPELYAMIDDIGRPVLTFGLEPFNDVQAVDLVTEGTKTHFTVLRRDHEPLRLTLNIPGVHNVYNALAAITMATDEGVDDAAITRALQKFEGVGRRFEQHASVTIDDGDVLLIDDYGHHPKEVDATIKAARQSFPERRLVMLFQPHRYSRTRDCFDDFVEVLSSVDELLLLDVYSAGESPIAGADTKALARSIRLRGAVEPTIVDKKNIAAVMQRLLKANDMLITQGAGNVGQIAIELAANDLYIK</sequence>